<sequence>MPNARILKIQAAAALNNLTLDIPQPFAFGTANKSPEFLQKFPTGKVPAFESSDGEVTLVESDAIAQYVAASGPAAPALLGRNVAEQAAVRQWICFAENEVFRNMMAVVLWRVGMREYDAGVDGEGAKGLEEALAVVERHLAVGEKEFLATEGELSLVDLTLASALFWAFMHYIDEEMRGRFPRVVRWYLRVVGAERVREVFGEPSLVAVRKEASV</sequence>
<dbReference type="EC" id="2.5.1.-" evidence="3"/>
<dbReference type="EMBL" id="KV878980">
    <property type="protein sequence ID" value="OJJ98487.1"/>
    <property type="status" value="ALT_SEQ"/>
    <property type="molecule type" value="Genomic_DNA"/>
</dbReference>
<dbReference type="RefSeq" id="XP_020054827.1">
    <property type="nucleotide sequence ID" value="XM_020203737.1"/>
</dbReference>
<dbReference type="SMR" id="P9WEZ8"/>
<dbReference type="OrthoDB" id="249703at2759"/>
<dbReference type="Proteomes" id="UP000184546">
    <property type="component" value="Unassembled WGS sequence"/>
</dbReference>
<dbReference type="GO" id="GO:0005737">
    <property type="term" value="C:cytoplasm"/>
    <property type="evidence" value="ECO:0007669"/>
    <property type="project" value="TreeGrafter"/>
</dbReference>
<dbReference type="GO" id="GO:0005634">
    <property type="term" value="C:nucleus"/>
    <property type="evidence" value="ECO:0007669"/>
    <property type="project" value="TreeGrafter"/>
</dbReference>
<dbReference type="GO" id="GO:0016740">
    <property type="term" value="F:transferase activity"/>
    <property type="evidence" value="ECO:0007669"/>
    <property type="project" value="UniProtKB-KW"/>
</dbReference>
<dbReference type="GO" id="GO:0006414">
    <property type="term" value="P:translational elongation"/>
    <property type="evidence" value="ECO:0007669"/>
    <property type="project" value="TreeGrafter"/>
</dbReference>
<dbReference type="CDD" id="cd03044">
    <property type="entry name" value="GST_N_EF1Bgamma"/>
    <property type="match status" value="1"/>
</dbReference>
<dbReference type="Gene3D" id="1.20.1050.10">
    <property type="match status" value="1"/>
</dbReference>
<dbReference type="Gene3D" id="3.40.30.10">
    <property type="entry name" value="Glutaredoxin"/>
    <property type="match status" value="1"/>
</dbReference>
<dbReference type="InterPro" id="IPR050802">
    <property type="entry name" value="EF-GSTs"/>
</dbReference>
<dbReference type="InterPro" id="IPR010987">
    <property type="entry name" value="Glutathione-S-Trfase_C-like"/>
</dbReference>
<dbReference type="InterPro" id="IPR036282">
    <property type="entry name" value="Glutathione-S-Trfase_C_sf"/>
</dbReference>
<dbReference type="InterPro" id="IPR040079">
    <property type="entry name" value="Glutathione_S-Trfase"/>
</dbReference>
<dbReference type="InterPro" id="IPR004045">
    <property type="entry name" value="Glutathione_S-Trfase_N"/>
</dbReference>
<dbReference type="InterPro" id="IPR004046">
    <property type="entry name" value="GST_C"/>
</dbReference>
<dbReference type="InterPro" id="IPR036249">
    <property type="entry name" value="Thioredoxin-like_sf"/>
</dbReference>
<dbReference type="PANTHER" id="PTHR43986">
    <property type="entry name" value="ELONGATION FACTOR 1-GAMMA"/>
    <property type="match status" value="1"/>
</dbReference>
<dbReference type="PANTHER" id="PTHR43986:SF10">
    <property type="entry name" value="ELONGATION FACTOR EEF-1B GAMMA SUBUNIT, PUTATIVE (AFU_ORTHOLOGUE AFUA_1G17120)-RELATED"/>
    <property type="match status" value="1"/>
</dbReference>
<dbReference type="Pfam" id="PF00043">
    <property type="entry name" value="GST_C"/>
    <property type="match status" value="1"/>
</dbReference>
<dbReference type="Pfam" id="PF02798">
    <property type="entry name" value="GST_N"/>
    <property type="match status" value="1"/>
</dbReference>
<dbReference type="SFLD" id="SFLDS00019">
    <property type="entry name" value="Glutathione_Transferase_(cytos"/>
    <property type="match status" value="1"/>
</dbReference>
<dbReference type="SFLD" id="SFLDG00358">
    <property type="entry name" value="Main_(cytGST)"/>
    <property type="match status" value="1"/>
</dbReference>
<dbReference type="SUPFAM" id="SSF47616">
    <property type="entry name" value="GST C-terminal domain-like"/>
    <property type="match status" value="1"/>
</dbReference>
<dbReference type="SUPFAM" id="SSF52833">
    <property type="entry name" value="Thioredoxin-like"/>
    <property type="match status" value="1"/>
</dbReference>
<dbReference type="PROSITE" id="PS50405">
    <property type="entry name" value="GST_CTER"/>
    <property type="match status" value="1"/>
</dbReference>
<dbReference type="PROSITE" id="PS50404">
    <property type="entry name" value="GST_NTER"/>
    <property type="match status" value="1"/>
</dbReference>
<feature type="chain" id="PRO_0000450429" description="Glutathione S-transferase-like protein">
    <location>
        <begin position="1"/>
        <end position="215"/>
    </location>
</feature>
<feature type="domain" description="GST N-terminal" evidence="1">
    <location>
        <begin position="1"/>
        <end position="76"/>
    </location>
</feature>
<feature type="domain" description="GST C-terminal" evidence="2">
    <location>
        <begin position="82"/>
        <end position="215"/>
    </location>
</feature>
<accession>P9WEZ8</accession>
<accession>A0A1L9WR54</accession>
<comment type="similarity">
    <text evidence="3">Belongs to the GST superfamily.</text>
</comment>
<comment type="sequence caution" evidence="3">
    <conflict type="erroneous gene model prediction">
        <sequence resource="EMBL-CDS" id="OJJ98487"/>
    </conflict>
    <text>The predicted gene ASPACDRAFT_61993 has been split into 2 genes: ASPACDRAFT_61993-1 and ASPACDRAFT_61993-2.</text>
</comment>
<name>FUS3_ASPA1</name>
<gene>
    <name type="ORF">ASPACDRAFT_61993-2</name>
</gene>
<keyword id="KW-1185">Reference proteome</keyword>
<keyword id="KW-0808">Transferase</keyword>
<evidence type="ECO:0000255" key="1">
    <source>
        <dbReference type="PROSITE-ProRule" id="PRU00684"/>
    </source>
</evidence>
<evidence type="ECO:0000255" key="2">
    <source>
        <dbReference type="PROSITE-ProRule" id="PRU00685"/>
    </source>
</evidence>
<evidence type="ECO:0000305" key="3"/>
<protein>
    <recommendedName>
        <fullName evidence="3">Glutathione S-transferase-like protein</fullName>
        <ecNumber evidence="3">2.5.1.-</ecNumber>
    </recommendedName>
</protein>
<reference key="1">
    <citation type="journal article" date="2017" name="Genome Biol.">
        <title>Comparative genomics reveals high biological diversity and specific adaptations in the industrially and medically important fungal genus Aspergillus.</title>
        <authorList>
            <person name="de Vries R.P."/>
            <person name="Riley R."/>
            <person name="Wiebenga A."/>
            <person name="Aguilar-Osorio G."/>
            <person name="Amillis S."/>
            <person name="Uchima C.A."/>
            <person name="Anderluh G."/>
            <person name="Asadollahi M."/>
            <person name="Askin M."/>
            <person name="Barry K."/>
            <person name="Battaglia E."/>
            <person name="Bayram O."/>
            <person name="Benocci T."/>
            <person name="Braus-Stromeyer S.A."/>
            <person name="Caldana C."/>
            <person name="Canovas D."/>
            <person name="Cerqueira G.C."/>
            <person name="Chen F."/>
            <person name="Chen W."/>
            <person name="Choi C."/>
            <person name="Clum A."/>
            <person name="Dos Santos R.A."/>
            <person name="Damasio A.R."/>
            <person name="Diallinas G."/>
            <person name="Emri T."/>
            <person name="Fekete E."/>
            <person name="Flipphi M."/>
            <person name="Freyberg S."/>
            <person name="Gallo A."/>
            <person name="Gournas C."/>
            <person name="Habgood R."/>
            <person name="Hainaut M."/>
            <person name="Harispe M.L."/>
            <person name="Henrissat B."/>
            <person name="Hilden K.S."/>
            <person name="Hope R."/>
            <person name="Hossain A."/>
            <person name="Karabika E."/>
            <person name="Karaffa L."/>
            <person name="Karanyi Z."/>
            <person name="Krasevec N."/>
            <person name="Kuo A."/>
            <person name="Kusch H."/>
            <person name="LaButti K."/>
            <person name="Lagendijk E.L."/>
            <person name="Lapidus A."/>
            <person name="Levasseur A."/>
            <person name="Lindquist E."/>
            <person name="Lipzen A."/>
            <person name="Logrieco A.F."/>
            <person name="MacCabe A."/>
            <person name="Maekelae M.R."/>
            <person name="Malavazi I."/>
            <person name="Melin P."/>
            <person name="Meyer V."/>
            <person name="Mielnichuk N."/>
            <person name="Miskei M."/>
            <person name="Molnar A.P."/>
            <person name="Mule G."/>
            <person name="Ngan C.Y."/>
            <person name="Orejas M."/>
            <person name="Orosz E."/>
            <person name="Ouedraogo J.P."/>
            <person name="Overkamp K.M."/>
            <person name="Park H.-S."/>
            <person name="Perrone G."/>
            <person name="Piumi F."/>
            <person name="Punt P.J."/>
            <person name="Ram A.F."/>
            <person name="Ramon A."/>
            <person name="Rauscher S."/>
            <person name="Record E."/>
            <person name="Riano-Pachon D.M."/>
            <person name="Robert V."/>
            <person name="Roehrig J."/>
            <person name="Ruller R."/>
            <person name="Salamov A."/>
            <person name="Salih N.S."/>
            <person name="Samson R.A."/>
            <person name="Sandor E."/>
            <person name="Sanguinetti M."/>
            <person name="Schuetze T."/>
            <person name="Sepcic K."/>
            <person name="Shelest E."/>
            <person name="Sherlock G."/>
            <person name="Sophianopoulou V."/>
            <person name="Squina F.M."/>
            <person name="Sun H."/>
            <person name="Susca A."/>
            <person name="Todd R.B."/>
            <person name="Tsang A."/>
            <person name="Unkles S.E."/>
            <person name="van de Wiele N."/>
            <person name="van Rossen-Uffink D."/>
            <person name="Oliveira J.V."/>
            <person name="Vesth T.C."/>
            <person name="Visser J."/>
            <person name="Yu J.-H."/>
            <person name="Zhou M."/>
            <person name="Andersen M.R."/>
            <person name="Archer D.B."/>
            <person name="Baker S.E."/>
            <person name="Benoit I."/>
            <person name="Brakhage A.A."/>
            <person name="Braus G.H."/>
            <person name="Fischer R."/>
            <person name="Frisvad J.C."/>
            <person name="Goldman G.H."/>
            <person name="Houbraken J."/>
            <person name="Oakley B."/>
            <person name="Pocsi I."/>
            <person name="Scazzocchio C."/>
            <person name="Seiboth B."/>
            <person name="vanKuyk P.A."/>
            <person name="Wortman J."/>
            <person name="Dyer P.S."/>
            <person name="Grigoriev I.V."/>
        </authorList>
    </citation>
    <scope>NUCLEOTIDE SEQUENCE [LARGE SCALE GENOMIC DNA]</scope>
    <source>
        <strain>ATCC 16872 / CBS 172.66 / WB 5094</strain>
    </source>
</reference>
<proteinExistence type="inferred from homology"/>
<organism>
    <name type="scientific">Aspergillus aculeatus (strain ATCC 16872 / CBS 172.66 / WB 5094)</name>
    <dbReference type="NCBI Taxonomy" id="690307"/>
    <lineage>
        <taxon>Eukaryota</taxon>
        <taxon>Fungi</taxon>
        <taxon>Dikarya</taxon>
        <taxon>Ascomycota</taxon>
        <taxon>Pezizomycotina</taxon>
        <taxon>Eurotiomycetes</taxon>
        <taxon>Eurotiomycetidae</taxon>
        <taxon>Eurotiales</taxon>
        <taxon>Aspergillaceae</taxon>
        <taxon>Aspergillus</taxon>
        <taxon>Aspergillus subgen. Circumdati</taxon>
    </lineage>
</organism>